<dbReference type="EC" id="4.1.3.1" evidence="5 11 15 17"/>
<dbReference type="EC" id="4.1.3.30" evidence="15 17"/>
<dbReference type="EMBL" id="X61271">
    <property type="protein sequence ID" value="CAA43575.1"/>
    <property type="molecule type" value="Genomic_DNA"/>
</dbReference>
<dbReference type="EMBL" id="X65554">
    <property type="protein sequence ID" value="CAA46523.1"/>
    <property type="molecule type" value="Genomic_DNA"/>
</dbReference>
<dbReference type="EMBL" id="U18813">
    <property type="protein sequence ID" value="AAB64601.1"/>
    <property type="molecule type" value="Genomic_DNA"/>
</dbReference>
<dbReference type="EMBL" id="BK006939">
    <property type="protein sequence ID" value="DAA07724.1"/>
    <property type="molecule type" value="Genomic_DNA"/>
</dbReference>
<dbReference type="PIR" id="S22386">
    <property type="entry name" value="WZBYI"/>
</dbReference>
<dbReference type="RefSeq" id="NP_010987.3">
    <property type="nucleotide sequence ID" value="NM_001178956.3"/>
</dbReference>
<dbReference type="PDB" id="7EBC">
    <property type="method" value="X-ray"/>
    <property type="resolution" value="2.30 A"/>
    <property type="chains" value="A/B/C/D=1-557"/>
</dbReference>
<dbReference type="PDBsum" id="7EBC"/>
<dbReference type="SMR" id="P28240"/>
<dbReference type="BioGRID" id="36807">
    <property type="interactions" value="88"/>
</dbReference>
<dbReference type="DIP" id="DIP-1663N"/>
<dbReference type="FunCoup" id="P28240">
    <property type="interactions" value="255"/>
</dbReference>
<dbReference type="IntAct" id="P28240">
    <property type="interactions" value="3"/>
</dbReference>
<dbReference type="MINT" id="P28240"/>
<dbReference type="STRING" id="4932.YER065C"/>
<dbReference type="iPTMnet" id="P28240"/>
<dbReference type="PaxDb" id="4932-YER065C"/>
<dbReference type="PeptideAtlas" id="P28240"/>
<dbReference type="EnsemblFungi" id="YER065C_mRNA">
    <property type="protein sequence ID" value="YER065C"/>
    <property type="gene ID" value="YER065C"/>
</dbReference>
<dbReference type="GeneID" id="856794"/>
<dbReference type="KEGG" id="sce:YER065C"/>
<dbReference type="AGR" id="SGD:S000000867"/>
<dbReference type="SGD" id="S000000867">
    <property type="gene designation" value="ICL1"/>
</dbReference>
<dbReference type="VEuPathDB" id="FungiDB:YER065C"/>
<dbReference type="eggNOG" id="KOG1260">
    <property type="taxonomic scope" value="Eukaryota"/>
</dbReference>
<dbReference type="HOGENOM" id="CLU_019214_2_2_1"/>
<dbReference type="InParanoid" id="P28240"/>
<dbReference type="OMA" id="YVSGWQV"/>
<dbReference type="OrthoDB" id="4078635at2759"/>
<dbReference type="BioCyc" id="YEAST:YER065C-MONOMER"/>
<dbReference type="SABIO-RK" id="P28240"/>
<dbReference type="UniPathway" id="UPA00703">
    <property type="reaction ID" value="UER00719"/>
</dbReference>
<dbReference type="BioGRID-ORCS" id="856794">
    <property type="hits" value="0 hits in 10 CRISPR screens"/>
</dbReference>
<dbReference type="PRO" id="PR:P28240"/>
<dbReference type="Proteomes" id="UP000002311">
    <property type="component" value="Chromosome V"/>
</dbReference>
<dbReference type="RNAct" id="P28240">
    <property type="molecule type" value="protein"/>
</dbReference>
<dbReference type="GO" id="GO:0005737">
    <property type="term" value="C:cytoplasm"/>
    <property type="evidence" value="ECO:0000314"/>
    <property type="project" value="SGD"/>
</dbReference>
<dbReference type="GO" id="GO:0005576">
    <property type="term" value="C:extracellular region"/>
    <property type="evidence" value="ECO:0007669"/>
    <property type="project" value="UniProtKB-KW"/>
</dbReference>
<dbReference type="GO" id="GO:0005773">
    <property type="term" value="C:vacuole"/>
    <property type="evidence" value="ECO:0007669"/>
    <property type="project" value="UniProtKB-SubCell"/>
</dbReference>
<dbReference type="GO" id="GO:0004451">
    <property type="term" value="F:isocitrate lyase activity"/>
    <property type="evidence" value="ECO:0000315"/>
    <property type="project" value="SGD"/>
</dbReference>
<dbReference type="GO" id="GO:0046872">
    <property type="term" value="F:metal ion binding"/>
    <property type="evidence" value="ECO:0007669"/>
    <property type="project" value="UniProtKB-KW"/>
</dbReference>
<dbReference type="GO" id="GO:0046421">
    <property type="term" value="F:methylisocitrate lyase activity"/>
    <property type="evidence" value="ECO:0007669"/>
    <property type="project" value="UniProtKB-EC"/>
</dbReference>
<dbReference type="GO" id="GO:0006097">
    <property type="term" value="P:glyoxylate cycle"/>
    <property type="evidence" value="ECO:0000315"/>
    <property type="project" value="SGD"/>
</dbReference>
<dbReference type="GO" id="GO:0006099">
    <property type="term" value="P:tricarboxylic acid cycle"/>
    <property type="evidence" value="ECO:0007669"/>
    <property type="project" value="UniProtKB-KW"/>
</dbReference>
<dbReference type="CDD" id="cd00377">
    <property type="entry name" value="ICL_PEPM"/>
    <property type="match status" value="1"/>
</dbReference>
<dbReference type="FunFam" id="1.10.10.850:FF:000001">
    <property type="entry name" value="Isocitrate lyase"/>
    <property type="match status" value="1"/>
</dbReference>
<dbReference type="Gene3D" id="1.10.10.850">
    <property type="match status" value="1"/>
</dbReference>
<dbReference type="Gene3D" id="3.20.20.60">
    <property type="entry name" value="Phosphoenolpyruvate-binding domains"/>
    <property type="match status" value="1"/>
</dbReference>
<dbReference type="InterPro" id="IPR039556">
    <property type="entry name" value="ICL/PEPM"/>
</dbReference>
<dbReference type="InterPro" id="IPR006254">
    <property type="entry name" value="Isocitrate_lyase"/>
</dbReference>
<dbReference type="InterPro" id="IPR018523">
    <property type="entry name" value="Isocitrate_lyase_ph_CS"/>
</dbReference>
<dbReference type="InterPro" id="IPR015813">
    <property type="entry name" value="Pyrv/PenolPyrv_kinase-like_dom"/>
</dbReference>
<dbReference type="InterPro" id="IPR040442">
    <property type="entry name" value="Pyrv_kinase-like_dom_sf"/>
</dbReference>
<dbReference type="NCBIfam" id="TIGR01346">
    <property type="entry name" value="isocit_lyase"/>
    <property type="match status" value="1"/>
</dbReference>
<dbReference type="PANTHER" id="PTHR21631:SF3">
    <property type="entry name" value="BIFUNCTIONAL GLYOXYLATE CYCLE PROTEIN"/>
    <property type="match status" value="1"/>
</dbReference>
<dbReference type="PANTHER" id="PTHR21631">
    <property type="entry name" value="ISOCITRATE LYASE/MALATE SYNTHASE"/>
    <property type="match status" value="1"/>
</dbReference>
<dbReference type="Pfam" id="PF00463">
    <property type="entry name" value="ICL"/>
    <property type="match status" value="1"/>
</dbReference>
<dbReference type="PIRSF" id="PIRSF001362">
    <property type="entry name" value="Isocit_lyase"/>
    <property type="match status" value="1"/>
</dbReference>
<dbReference type="SUPFAM" id="SSF51621">
    <property type="entry name" value="Phosphoenolpyruvate/pyruvate domain"/>
    <property type="match status" value="1"/>
</dbReference>
<dbReference type="PROSITE" id="PS00161">
    <property type="entry name" value="ISOCITRATE_LYASE"/>
    <property type="match status" value="1"/>
</dbReference>
<protein>
    <recommendedName>
        <fullName evidence="24">Isocitrate lyase</fullName>
        <shortName evidence="26">ICL</shortName>
        <ecNumber evidence="5 11 15 17">4.1.3.1</ecNumber>
    </recommendedName>
    <alternativeName>
        <fullName evidence="25">Methylisocitrate lyase</fullName>
        <shortName evidence="26">MICA</shortName>
        <ecNumber evidence="15 17">4.1.3.30</ecNumber>
    </alternativeName>
    <alternativeName>
        <fullName evidence="26">Threo-D(S)-isocitrate glyoxylate-lyase</fullName>
    </alternativeName>
</protein>
<name>ACEA_YEAST</name>
<sequence length="557" mass="62409">MPIPVGNTKNDFAALQAKLDADAAEIEKWWSDSRWSKTKRNYSARDIAVRRGTFPPIEYPSSVMARKLFKVLEKHHNEGTVSKTFGALDPVQISQMAKYLDTIYISGWQCSSTASTSNEPGPDLADYPMDTVPNKVEHLFKAQLFHDRKQLEARSKAKSQEELDEMGAPIDYLTPIVADADAGHGGLTAVFKLTKMFIERGAAGIHMEDQTSTNKKCGHMAGRCVIPVQEHVNRLVTIRMCADIMHSDLIVVARTDSEAATLISSTIDTRDHYFIVGATNPNIEPFAEVLNDAIMSGASGQELADIEQKWCRDAGLKLFHEAVIDEIERSALSNKQELIKKFTSKVGPLTETSHREAKKLAKEILGHEIFFDWELPRVREGLYRYRGGTQCSIMRARAFAPYADLVWMESNYPDFQQAKEFAEGVKEKFPDQWLAYNLSPSFNWPKAMSVDEQHTFIQRLGDLGYIWQFITLAGLHTNALAVHNFSRDFAKDGMKAYAQNVQQREMDDGVDVLKHQKWSGAEYIDGLLKLAQGGVSATAAMGTGVTEDQFKENGVKK</sequence>
<accession>P28240</accession>
<accession>D3DLX0</accession>
<gene>
    <name evidence="24" type="primary">ICL1</name>
    <name evidence="29" type="ordered locus">YER065C</name>
</gene>
<proteinExistence type="evidence at protein level"/>
<evidence type="ECO:0000250" key="1">
    <source>
        <dbReference type="UniProtKB" id="P9WKK7"/>
    </source>
</evidence>
<evidence type="ECO:0000255" key="2"/>
<evidence type="ECO:0000269" key="3">
    <source>
    </source>
</evidence>
<evidence type="ECO:0000269" key="4">
    <source>
    </source>
</evidence>
<evidence type="ECO:0000269" key="5">
    <source>
    </source>
</evidence>
<evidence type="ECO:0000269" key="6">
    <source>
    </source>
</evidence>
<evidence type="ECO:0000269" key="7">
    <source>
    </source>
</evidence>
<evidence type="ECO:0000269" key="8">
    <source>
    </source>
</evidence>
<evidence type="ECO:0000269" key="9">
    <source>
    </source>
</evidence>
<evidence type="ECO:0000269" key="10">
    <source>
    </source>
</evidence>
<evidence type="ECO:0000269" key="11">
    <source>
    </source>
</evidence>
<evidence type="ECO:0000269" key="12">
    <source>
    </source>
</evidence>
<evidence type="ECO:0000269" key="13">
    <source>
    </source>
</evidence>
<evidence type="ECO:0000269" key="14">
    <source>
    </source>
</evidence>
<evidence type="ECO:0000269" key="15">
    <source>
    </source>
</evidence>
<evidence type="ECO:0000269" key="16">
    <source>
    </source>
</evidence>
<evidence type="ECO:0000269" key="17">
    <source>
    </source>
</evidence>
<evidence type="ECO:0000269" key="18">
    <source>
    </source>
</evidence>
<evidence type="ECO:0000269" key="19">
    <source>
    </source>
</evidence>
<evidence type="ECO:0000269" key="20">
    <source>
    </source>
</evidence>
<evidence type="ECO:0000269" key="21">
    <source>
    </source>
</evidence>
<evidence type="ECO:0000269" key="22">
    <source>
    </source>
</evidence>
<evidence type="ECO:0000269" key="23">
    <source>
    </source>
</evidence>
<evidence type="ECO:0000303" key="24">
    <source>
    </source>
</evidence>
<evidence type="ECO:0000303" key="25">
    <source>
    </source>
</evidence>
<evidence type="ECO:0000305" key="26"/>
<evidence type="ECO:0000305" key="27">
    <source>
    </source>
</evidence>
<evidence type="ECO:0000305" key="28">
    <source>
    </source>
</evidence>
<evidence type="ECO:0000312" key="29">
    <source>
        <dbReference type="SGD" id="S000000867"/>
    </source>
</evidence>
<evidence type="ECO:0007829" key="30">
    <source>
        <dbReference type="PDB" id="7EBC"/>
    </source>
</evidence>
<comment type="function">
    <text evidence="4 5 10 11 15 17">Catalyzes the formation of succinate and glyoxylate from isocitrate, a key step of the glyoxylate cycle, which operates as an anaplerotic route for replenishing the tricarboxylic acid cycle. Required for growth on ethanol or acetate, but dispensable when fermentable carbon sources are available. Also acts on 2-methylisocitrate.</text>
</comment>
<comment type="catalytic activity">
    <reaction evidence="5 11 15 17">
        <text>D-threo-isocitrate = glyoxylate + succinate</text>
        <dbReference type="Rhea" id="RHEA:13245"/>
        <dbReference type="ChEBI" id="CHEBI:15562"/>
        <dbReference type="ChEBI" id="CHEBI:30031"/>
        <dbReference type="ChEBI" id="CHEBI:36655"/>
        <dbReference type="EC" id="4.1.3.1"/>
    </reaction>
</comment>
<comment type="catalytic activity">
    <reaction evidence="15 17">
        <text>(2S,3R)-3-hydroxybutane-1,2,3-tricarboxylate = pyruvate + succinate</text>
        <dbReference type="Rhea" id="RHEA:16809"/>
        <dbReference type="ChEBI" id="CHEBI:15361"/>
        <dbReference type="ChEBI" id="CHEBI:30031"/>
        <dbReference type="ChEBI" id="CHEBI:57429"/>
        <dbReference type="EC" id="4.1.3.30"/>
    </reaction>
</comment>
<comment type="cofactor">
    <cofactor evidence="1">
        <name>Mg(2+)</name>
        <dbReference type="ChEBI" id="CHEBI:18420"/>
    </cofactor>
</comment>
<comment type="activity regulation">
    <text evidence="16">Phosphorylated and inactivated after addition of glucose to the cell culture (repressing conditions).</text>
</comment>
<comment type="biophysicochemical properties">
    <kinetics>
        <KM evidence="15 17">1.4 mM for threo-D(S)-isocitrate (at pH 7.0)</KM>
        <KM evidence="15 17">0.6 mM for threo-D(S)-2-methylisocitrate (at pH 7.0 and 30 degrees Celsius)</KM>
        <text evidence="15 17">The Vmax with threo-D(S)-isocitrate as substrate is 5-fold higher than with threo-D(S)-2-methylisocitrate as substrate.</text>
    </kinetics>
    <phDependence>
        <text evidence="15 17">Optimum pH is 7.</text>
    </phDependence>
    <temperatureDependence>
        <text evidence="15 17">Thermostable for 60 minutes up to 50 degrees Celsius.</text>
    </temperatureDependence>
</comment>
<comment type="pathway">
    <text evidence="27 28">Carbohydrate metabolism; glyoxylate cycle; (S)-malate from isocitrate: step 1/2.</text>
</comment>
<comment type="subunit">
    <text evidence="15">Homotetramer.</text>
</comment>
<comment type="subcellular location">
    <subcellularLocation>
        <location evidence="8 20 22">Cytoplasm</location>
    </subcellularLocation>
    <subcellularLocation>
        <location evidence="13 14">Secreted</location>
        <location evidence="13 14">Extracellular space</location>
        <location evidence="13 14">Extracellular matrix</location>
    </subcellularLocation>
    <subcellularLocation>
        <location evidence="7 8">Vacuole</location>
    </subcellularLocation>
    <text evidence="8 13 14">Localizes in extracellular vesicles during growth on lown glucose. When glucose is added to glucose-starved wild-type cells, levels of extracellular ICL1 get reduced. Targeted to the vacuole for degradation in 3-day-starved cells.</text>
</comment>
<comment type="induction">
    <text evidence="3 6 16 18 23">Repressed by glucose and induced by ethanol via the transcriptional activator CAT8. The promoter sequence located between -397 and -388 contains an upstream activating sequence (UAS)element whereas the sequence located between -261 and -242 contains an upstream repressing sequence (URS) element.</text>
</comment>
<comment type="PTM">
    <text evidence="16">Phosphorylated in response to elevated glucose levels, leading first to reversible inactivation of the enzyme (short-term inactivation), and at a later stage to proteolytic degradation of the protein (long-term inactivation).</text>
</comment>
<comment type="disruption phenotype">
    <text evidence="4 5 9 11 12">Impairs growth when acetate or ethanol are the sole carbon source. Leads to reduced chronological lifespan.</text>
</comment>
<comment type="miscellaneous">
    <text evidence="22">Yeast isocitrate lyase is the only eukaryotic member of this family that is located in the cytoplasm, instead of being targeted to the peroxisome or the glyoxysome.</text>
</comment>
<comment type="similarity">
    <text evidence="26">Belongs to the isocitrate lyase/PEP mutase superfamily. Isocitrate lyase family.</text>
</comment>
<organism>
    <name type="scientific">Saccharomyces cerevisiae (strain ATCC 204508 / S288c)</name>
    <name type="common">Baker's yeast</name>
    <dbReference type="NCBI Taxonomy" id="559292"/>
    <lineage>
        <taxon>Eukaryota</taxon>
        <taxon>Fungi</taxon>
        <taxon>Dikarya</taxon>
        <taxon>Ascomycota</taxon>
        <taxon>Saccharomycotina</taxon>
        <taxon>Saccharomycetes</taxon>
        <taxon>Saccharomycetales</taxon>
        <taxon>Saccharomycetaceae</taxon>
        <taxon>Saccharomyces</taxon>
    </lineage>
</organism>
<keyword id="KW-0002">3D-structure</keyword>
<keyword id="KW-0963">Cytoplasm</keyword>
<keyword id="KW-0272">Extracellular matrix</keyword>
<keyword id="KW-0329">Glyoxylate bypass</keyword>
<keyword id="KW-0456">Lyase</keyword>
<keyword id="KW-0460">Magnesium</keyword>
<keyword id="KW-0479">Metal-binding</keyword>
<keyword id="KW-0597">Phosphoprotein</keyword>
<keyword id="KW-1185">Reference proteome</keyword>
<keyword id="KW-0964">Secreted</keyword>
<keyword id="KW-0816">Tricarboxylic acid cycle</keyword>
<keyword id="KW-0926">Vacuole</keyword>
<feature type="chain" id="PRO_0000068799" description="Isocitrate lyase">
    <location>
        <begin position="1"/>
        <end position="557"/>
    </location>
</feature>
<feature type="active site" description="Proton acceptor" evidence="26">
    <location>
        <position position="217"/>
    </location>
</feature>
<feature type="binding site" evidence="1">
    <location>
        <begin position="106"/>
        <end position="108"/>
    </location>
    <ligand>
        <name>substrate</name>
    </ligand>
</feature>
<feature type="binding site" evidence="1">
    <location>
        <position position="179"/>
    </location>
    <ligand>
        <name>Mg(2+)</name>
        <dbReference type="ChEBI" id="CHEBI:18420"/>
    </ligand>
</feature>
<feature type="binding site" evidence="1">
    <location>
        <begin position="218"/>
        <end position="219"/>
    </location>
    <ligand>
        <name>substrate</name>
    </ligand>
</feature>
<feature type="binding site" evidence="1">
    <location>
        <position position="254"/>
    </location>
    <ligand>
        <name>substrate</name>
    </ligand>
</feature>
<feature type="binding site" evidence="1">
    <location>
        <begin position="437"/>
        <end position="441"/>
    </location>
    <ligand>
        <name>substrate</name>
    </ligand>
</feature>
<feature type="binding site" evidence="1">
    <location>
        <position position="471"/>
    </location>
    <ligand>
        <name>substrate</name>
    </ligand>
</feature>
<feature type="modified residue" description="Phosphothreonine" evidence="2">
    <location>
        <position position="53"/>
    </location>
</feature>
<feature type="mutagenesis site" description="Abolishes short-term enzyme inactivation by glucose addition." evidence="19">
    <original>T</original>
    <variation>A</variation>
    <location>
        <position position="53"/>
    </location>
</feature>
<feature type="mutagenesis site" description="Reduces activity by 45%; when associated with L-220." evidence="21">
    <original>K</original>
    <variation>R</variation>
    <location>
        <position position="216"/>
    </location>
</feature>
<feature type="mutagenesis site" description="Reduces activity by 45%; when associated with R-216." evidence="21">
    <original>M</original>
    <variation>L</variation>
    <location>
        <position position="220"/>
    </location>
</feature>
<feature type="helix" evidence="30">
    <location>
        <begin position="12"/>
        <end position="30"/>
    </location>
</feature>
<feature type="helix" evidence="30">
    <location>
        <begin position="33"/>
        <end position="35"/>
    </location>
</feature>
<feature type="helix" evidence="30">
    <location>
        <begin position="44"/>
        <end position="48"/>
    </location>
</feature>
<feature type="helix" evidence="30">
    <location>
        <begin position="60"/>
        <end position="78"/>
    </location>
</feature>
<feature type="strand" evidence="30">
    <location>
        <begin position="82"/>
        <end position="86"/>
    </location>
</feature>
<feature type="helix" evidence="30">
    <location>
        <begin position="90"/>
        <end position="96"/>
    </location>
</feature>
<feature type="turn" evidence="30">
    <location>
        <begin position="97"/>
        <end position="99"/>
    </location>
</feature>
<feature type="strand" evidence="30">
    <location>
        <begin position="103"/>
        <end position="105"/>
    </location>
</feature>
<feature type="helix" evidence="30">
    <location>
        <begin position="107"/>
        <end position="113"/>
    </location>
</feature>
<feature type="strand" evidence="30">
    <location>
        <begin position="122"/>
        <end position="125"/>
    </location>
</feature>
<feature type="helix" evidence="30">
    <location>
        <begin position="131"/>
        <end position="154"/>
    </location>
</feature>
<feature type="helix" evidence="30">
    <location>
        <begin position="160"/>
        <end position="166"/>
    </location>
</feature>
<feature type="strand" evidence="30">
    <location>
        <begin position="176"/>
        <end position="179"/>
    </location>
</feature>
<feature type="strand" evidence="30">
    <location>
        <begin position="184"/>
        <end position="186"/>
    </location>
</feature>
<feature type="helix" evidence="30">
    <location>
        <begin position="187"/>
        <end position="200"/>
    </location>
</feature>
<feature type="strand" evidence="30">
    <location>
        <begin position="203"/>
        <end position="210"/>
    </location>
</feature>
<feature type="strand" evidence="30">
    <location>
        <begin position="212"/>
        <end position="214"/>
    </location>
</feature>
<feature type="helix" evidence="30">
    <location>
        <begin position="228"/>
        <end position="244"/>
    </location>
</feature>
<feature type="strand" evidence="30">
    <location>
        <begin position="250"/>
        <end position="255"/>
    </location>
</feature>
<feature type="helix" evidence="30">
    <location>
        <begin position="257"/>
        <end position="259"/>
    </location>
</feature>
<feature type="strand" evidence="30">
    <location>
        <begin position="262"/>
        <end position="264"/>
    </location>
</feature>
<feature type="helix" evidence="30">
    <location>
        <begin position="269"/>
        <end position="274"/>
    </location>
</feature>
<feature type="helix" evidence="30">
    <location>
        <begin position="286"/>
        <end position="295"/>
    </location>
</feature>
<feature type="helix" evidence="30">
    <location>
        <begin position="300"/>
        <end position="314"/>
    </location>
</feature>
<feature type="helix" evidence="30">
    <location>
        <begin position="319"/>
        <end position="329"/>
    </location>
</feature>
<feature type="helix" evidence="30">
    <location>
        <begin position="335"/>
        <end position="345"/>
    </location>
</feature>
<feature type="turn" evidence="30">
    <location>
        <begin position="348"/>
        <end position="350"/>
    </location>
</feature>
<feature type="helix" evidence="30">
    <location>
        <begin position="354"/>
        <end position="365"/>
    </location>
</feature>
<feature type="strand" evidence="30">
    <location>
        <begin position="372"/>
        <end position="374"/>
    </location>
</feature>
<feature type="strand" evidence="30">
    <location>
        <begin position="383"/>
        <end position="385"/>
    </location>
</feature>
<feature type="helix" evidence="30">
    <location>
        <begin position="389"/>
        <end position="399"/>
    </location>
</feature>
<feature type="helix" evidence="30">
    <location>
        <begin position="400"/>
        <end position="402"/>
    </location>
</feature>
<feature type="strand" evidence="30">
    <location>
        <begin position="404"/>
        <end position="408"/>
    </location>
</feature>
<feature type="helix" evidence="30">
    <location>
        <begin position="415"/>
        <end position="426"/>
    </location>
</feature>
<feature type="strand" evidence="30">
    <location>
        <begin position="433"/>
        <end position="437"/>
    </location>
</feature>
<feature type="strand" evidence="30">
    <location>
        <begin position="440"/>
        <end position="442"/>
    </location>
</feature>
<feature type="helix" evidence="30">
    <location>
        <begin position="444"/>
        <end position="447"/>
    </location>
</feature>
<feature type="helix" evidence="30">
    <location>
        <begin position="450"/>
        <end position="461"/>
    </location>
</feature>
<feature type="turn" evidence="30">
    <location>
        <begin position="462"/>
        <end position="464"/>
    </location>
</feature>
<feature type="strand" evidence="30">
    <location>
        <begin position="465"/>
        <end position="470"/>
    </location>
</feature>
<feature type="helix" evidence="30">
    <location>
        <begin position="473"/>
        <end position="492"/>
    </location>
</feature>
<feature type="helix" evidence="30">
    <location>
        <begin position="494"/>
        <end position="500"/>
    </location>
</feature>
<feature type="helix" evidence="30">
    <location>
        <begin position="502"/>
        <end position="508"/>
    </location>
</feature>
<feature type="helix" evidence="30">
    <location>
        <begin position="511"/>
        <end position="513"/>
    </location>
</feature>
<feature type="helix" evidence="30">
    <location>
        <begin position="515"/>
        <end position="519"/>
    </location>
</feature>
<feature type="helix" evidence="30">
    <location>
        <begin position="521"/>
        <end position="531"/>
    </location>
</feature>
<reference key="1">
    <citation type="journal article" date="1992" name="Eur. J. Biochem.">
        <title>The ICL1 gene from Saccharomyces cerevisiae.</title>
        <authorList>
            <person name="Fernandez E."/>
            <person name="Moreno F."/>
            <person name="Rodicio R."/>
        </authorList>
    </citation>
    <scope>NUCLEOTIDE SEQUENCE [GENOMIC DNA]</scope>
    <scope>FUNCTION</scope>
    <scope>CATALYTIC ACTIVITY</scope>
    <scope>DISRUPTION PHENOTYPE</scope>
</reference>
<reference key="2">
    <citation type="journal article" date="1993" name="Curr. Genet.">
        <title>Structure and regulation of the isocitrate lyase gene ICL1 from the yeast Saccharomyces cerevisiae.</title>
        <authorList>
            <person name="Schoeler A."/>
            <person name="Schueller H.-J."/>
        </authorList>
    </citation>
    <scope>NUCLEOTIDE SEQUENCE [GENOMIC DNA]</scope>
    <scope>INDUCTION</scope>
    <source>
        <strain>DBY939</strain>
    </source>
</reference>
<reference key="3">
    <citation type="journal article" date="1997" name="Nature">
        <title>The nucleotide sequence of Saccharomyces cerevisiae chromosome V.</title>
        <authorList>
            <person name="Dietrich F.S."/>
            <person name="Mulligan J.T."/>
            <person name="Hennessy K.M."/>
            <person name="Yelton M.A."/>
            <person name="Allen E."/>
            <person name="Araujo R."/>
            <person name="Aviles E."/>
            <person name="Berno A."/>
            <person name="Brennan T."/>
            <person name="Carpenter J."/>
            <person name="Chen E."/>
            <person name="Cherry J.M."/>
            <person name="Chung E."/>
            <person name="Duncan M."/>
            <person name="Guzman E."/>
            <person name="Hartzell G."/>
            <person name="Hunicke-Smith S."/>
            <person name="Hyman R.W."/>
            <person name="Kayser A."/>
            <person name="Komp C."/>
            <person name="Lashkari D."/>
            <person name="Lew H."/>
            <person name="Lin D."/>
            <person name="Mosedale D."/>
            <person name="Nakahara K."/>
            <person name="Namath A."/>
            <person name="Norgren R."/>
            <person name="Oefner P."/>
            <person name="Oh C."/>
            <person name="Petel F.X."/>
            <person name="Roberts D."/>
            <person name="Sehl P."/>
            <person name="Schramm S."/>
            <person name="Shogren T."/>
            <person name="Smith V."/>
            <person name="Taylor P."/>
            <person name="Wei Y."/>
            <person name="Botstein D."/>
            <person name="Davis R.W."/>
        </authorList>
    </citation>
    <scope>NUCLEOTIDE SEQUENCE [LARGE SCALE GENOMIC DNA]</scope>
    <source>
        <strain>ATCC 204508 / S288c</strain>
    </source>
</reference>
<reference key="4">
    <citation type="journal article" date="2014" name="G3 (Bethesda)">
        <title>The reference genome sequence of Saccharomyces cerevisiae: Then and now.</title>
        <authorList>
            <person name="Engel S.R."/>
            <person name="Dietrich F.S."/>
            <person name="Fisk D.G."/>
            <person name="Binkley G."/>
            <person name="Balakrishnan R."/>
            <person name="Costanzo M.C."/>
            <person name="Dwight S.S."/>
            <person name="Hitz B.C."/>
            <person name="Karra K."/>
            <person name="Nash R.S."/>
            <person name="Weng S."/>
            <person name="Wong E.D."/>
            <person name="Lloyd P."/>
            <person name="Skrzypek M.S."/>
            <person name="Miyasato S.R."/>
            <person name="Simison M."/>
            <person name="Cherry J.M."/>
        </authorList>
    </citation>
    <scope>GENOME REANNOTATION</scope>
    <source>
        <strain>ATCC 204508 / S288c</strain>
    </source>
</reference>
<reference key="5">
    <citation type="journal article" date="1972" name="Arch. Biochem. Biophys.">
        <title>Production of pyruvate and succinate by action of isocitrate lyase on alpha-methylisocitrate.</title>
        <authorList>
            <person name="McFadden B.A."/>
            <person name="Rose I.A."/>
            <person name="Williams J.O."/>
        </authorList>
    </citation>
    <scope>FUNCTION</scope>
    <scope>CATALYTIC ACTIVITY</scope>
    <scope>BIOPHYSICOCHEMICAL PROPERTIES</scope>
</reference>
<reference key="6">
    <citation type="journal article" date="1988" name="J. Gen. Microbiol.">
        <title>Glucose-stimulated phosphorylation of yeast isocitrate lyase in vivo.</title>
        <authorList>
            <person name="Lopez-Boado Y.S."/>
            <person name="Herrero P."/>
            <person name="Fernandez M.-T."/>
            <person name="Fernandez R."/>
            <person name="Moreno F."/>
        </authorList>
    </citation>
    <scope>PHOSPHORYLATION</scope>
    <scope>ACTIVITY REGULATION</scope>
    <scope>INDUCTION</scope>
</reference>
<reference key="7">
    <citation type="journal article" date="1988" name="Yeast">
        <title>Purification of isocitrate lyase from Saccharomyces cerevisiae.</title>
        <authorList>
            <person name="Lopez-Boado Y.S."/>
            <person name="Herrero P."/>
            <person name="Fernandez M.-T."/>
            <person name="Fernandez R."/>
            <person name="Moreno F."/>
        </authorList>
    </citation>
    <scope>FUNCTION</scope>
    <scope>CATALYTIC ACTIVITY</scope>
    <scope>BIOPHYSICOCHEMICAL PROPERTIES</scope>
    <scope>SUBUNIT</scope>
</reference>
<reference key="8">
    <citation type="journal article" date="1996" name="Biochem. J.">
        <title>Localization and targeting of isocitrate lyases in Saccharomyces cerevisiae.</title>
        <authorList>
            <person name="Taylor K.M."/>
            <person name="Kaplan C.P."/>
            <person name="Gao X."/>
            <person name="Baker A."/>
        </authorList>
    </citation>
    <scope>SUBCELLULAR LOCATION</scope>
</reference>
<reference key="9">
    <citation type="journal article" date="1996" name="FEBS Lett.">
        <title>Glucose-induced inactivation of isocitrate lyase in Saccharomyces cerevisiae is mediated by the cAMP-dependent protein kinase catalytic subunits Tpk1 and Tpk2.</title>
        <authorList>
            <person name="Ordiz I."/>
            <person name="Herrero P."/>
            <person name="Rodicio R."/>
            <person name="Moreno F."/>
        </authorList>
    </citation>
    <scope>MUTAGENESIS OF THR-53</scope>
</reference>
<reference key="10">
    <citation type="journal article" date="1996" name="Yeast">
        <title>Molecular genetics of ICL2, encoding a non-functional isocitrate lyase in Saccharomyces cerevisiae.</title>
        <authorList>
            <person name="Heinisch J.J."/>
            <person name="Valdes E."/>
            <person name="Alvarez J."/>
            <person name="Rodicio R."/>
        </authorList>
    </citation>
    <scope>MUTAGENESIS OF LYS-216 AND MET-220</scope>
</reference>
<reference key="11">
    <citation type="journal article" date="1997" name="Gene">
        <title>Isocitrate lyase localisation in Saccharomyces cerevisiae cells.</title>
        <authorList>
            <person name="Chaves R.S."/>
            <person name="Herrero P."/>
            <person name="Ordiz I."/>
            <person name="Angeles del Brio M."/>
            <person name="Moreno F."/>
        </authorList>
    </citation>
    <scope>SUBCELLULAR LOCATION</scope>
</reference>
<reference key="12">
    <citation type="journal article" date="1998" name="Biochem. J.">
        <title>A 27 kDa protein binds to a positive and a negative regulatory sequence in the promoter of the ICL1 gene from Saccharomyces cerevisiae.</title>
        <authorList>
            <person name="Ordiz I."/>
            <person name="Herrero P."/>
            <person name="Rodicio R."/>
            <person name="Gancedo J.M."/>
            <person name="Moreno F."/>
        </authorList>
    </citation>
    <scope>INDUCTION</scope>
</reference>
<reference key="13">
    <citation type="journal article" date="1999" name="Mol. Microbiol.">
        <title>Deregulation of gluconeogenic structural genes by variants of the transcriptional activator Cat8p of the yeast Saccharomyces cerevisiae.</title>
        <authorList>
            <person name="Rahner A."/>
            <person name="Hiesinger M."/>
            <person name="Schueller H.-J."/>
        </authorList>
    </citation>
    <scope>INDUCTION</scope>
</reference>
<reference key="14">
    <citation type="journal article" date="2001" name="Nature">
        <title>The glyoxylate cycle is required for fungal virulence.</title>
        <authorList>
            <person name="Lorenz M.C."/>
            <person name="Fink G.R."/>
        </authorList>
    </citation>
    <scope>DISRUPTION PHENOTYPE</scope>
    <scope>FUNCTION</scope>
</reference>
<reference key="15">
    <citation type="journal article" date="2007" name="FEBS J.">
        <title>Analysis of the vacuolar luminal proteome of Saccharomyces cerevisiae.</title>
        <authorList>
            <person name="Sarry J.E."/>
            <person name="Chen S."/>
            <person name="Collum R.P."/>
            <person name="Liang S."/>
            <person name="Peng M."/>
            <person name="Lang A."/>
            <person name="Naumann B."/>
            <person name="Dzierszinski F."/>
            <person name="Yuan C.X."/>
            <person name="Hippler M."/>
            <person name="Rea P.A."/>
        </authorList>
    </citation>
    <scope>IDENTIFICATION BY MASS SPECTROMETRY</scope>
    <scope>SUBCELLULAR LOCATION</scope>
</reference>
<reference key="16">
    <citation type="journal article" date="2007" name="FEMS Yeast Res.">
        <title>Glucose controls multiple processes in Saccharomyces cerevisiae through diverse combinations of signaling pathways.</title>
        <authorList>
            <person name="Belinchon M.M."/>
            <person name="Gancedo J.M."/>
        </authorList>
    </citation>
    <scope>INDUCTION</scope>
</reference>
<reference key="17">
    <citation type="journal article" date="2010" name="J. Biol. Chem.">
        <title>The TOR complex 1 is distributed in endosomes and in retrograde vesicles that form from the vacuole membrane and plays an important role in the vacuole import and degradation pathway.</title>
        <authorList>
            <person name="Brown C.R."/>
            <person name="Hung G.C."/>
            <person name="Dunton D."/>
            <person name="Chiang H.L."/>
        </authorList>
    </citation>
    <scope>SUBCELLULAR LOCATION</scope>
</reference>
<reference key="18">
    <citation type="journal article" date="2011" name="Yeast">
        <title>TCA cycle-independent acetate metabolism via the glyoxylate cycle in Saccharomyces cerevisiae.</title>
        <authorList>
            <person name="Lee Y.J."/>
            <person name="Jang J.W."/>
            <person name="Kim K.J."/>
            <person name="Maeng P.J."/>
        </authorList>
    </citation>
    <scope>DISRUPTION PHENOTYPE</scope>
</reference>
<reference key="19">
    <citation type="journal article" date="2012" name="PLoS ONE">
        <title>Profiling of cytosolic and peroxisomal acetyl-CoA metabolism in Saccharomyces cerevisiae.</title>
        <authorList>
            <person name="Chen Y."/>
            <person name="Siewers V."/>
            <person name="Nielsen J."/>
        </authorList>
    </citation>
    <scope>FUNCTION</scope>
</reference>
<reference key="20">
    <citation type="journal article" date="2013" name="Biochim. Biophys. Acta">
        <title>Lack of Sir2 increases acetate consumption and decreases extracellular pro-aging factors.</title>
        <authorList>
            <person name="Casatta N."/>
            <person name="Porro A."/>
            <person name="Orlandi I."/>
            <person name="Brambilla L."/>
            <person name="Vai M."/>
        </authorList>
    </citation>
    <scope>CATALYTIC ACTIVITY</scope>
    <scope>FUNCTION</scope>
    <scope>DISRUPTION PHENOTYPE</scope>
</reference>
<reference key="21">
    <citation type="journal article" date="2013" name="Oxid. Med. Cell. Longev.">
        <title>Ethanol and acetate acting as carbon/energy sources negatively affect yeast chronological aging.</title>
        <authorList>
            <person name="Orlandi I."/>
            <person name="Ronzulli R."/>
            <person name="Casatta N."/>
            <person name="Vai M."/>
        </authorList>
    </citation>
    <scope>DISRUPTION PHENOTYPE</scope>
</reference>
<reference key="22">
    <citation type="journal article" date="2014" name="J. Extracell. Vesicles">
        <title>The endocytosis gene END3 is essential for the glucose-induced rapid decline of small vesicles in the extracellular fraction in Saccharomyces cerevisiae.</title>
        <authorList>
            <person name="Giardina B.J."/>
            <person name="Stein K."/>
            <person name="Chiang H.L."/>
        </authorList>
    </citation>
    <scope>IDENTIFICATION BY MASS SPECTROMETRY</scope>
    <scope>SUBCELLULAR LOCATION</scope>
</reference>
<reference key="23">
    <citation type="journal article" date="2014" name="Proteome Sci.">
        <title>Glucose induces rapid changes in the secretome of Saccharomyces cerevisiae.</title>
        <authorList>
            <person name="Giardina B.J."/>
            <person name="Stanley B.A."/>
            <person name="Chiang H.L."/>
        </authorList>
    </citation>
    <scope>SUBCELLULAR LOCATION</scope>
</reference>